<organism>
    <name type="scientific">Pseudoalteromonas translucida (strain TAC 125)</name>
    <dbReference type="NCBI Taxonomy" id="326442"/>
    <lineage>
        <taxon>Bacteria</taxon>
        <taxon>Pseudomonadati</taxon>
        <taxon>Pseudomonadota</taxon>
        <taxon>Gammaproteobacteria</taxon>
        <taxon>Alteromonadales</taxon>
        <taxon>Pseudoalteromonadaceae</taxon>
        <taxon>Pseudoalteromonas</taxon>
    </lineage>
</organism>
<comment type="function">
    <text evidence="1">Modifies, by uridylylation and deuridylylation, the PII regulatory proteins (GlnB and homologs), in response to the nitrogen status of the cell that GlnD senses through the glutamine level. Under low glutamine levels, catalyzes the conversion of the PII proteins and UTP to PII-UMP and PPi, while under higher glutamine levels, GlnD hydrolyzes PII-UMP to PII and UMP (deuridylylation). Thus, controls uridylylation state and activity of the PII proteins, and plays an important role in the regulation of nitrogen assimilation and metabolism.</text>
</comment>
<comment type="catalytic activity">
    <reaction evidence="1">
        <text>[protein-PII]-L-tyrosine + UTP = [protein-PII]-uridylyl-L-tyrosine + diphosphate</text>
        <dbReference type="Rhea" id="RHEA:13673"/>
        <dbReference type="Rhea" id="RHEA-COMP:12147"/>
        <dbReference type="Rhea" id="RHEA-COMP:12148"/>
        <dbReference type="ChEBI" id="CHEBI:33019"/>
        <dbReference type="ChEBI" id="CHEBI:46398"/>
        <dbReference type="ChEBI" id="CHEBI:46858"/>
        <dbReference type="ChEBI" id="CHEBI:90602"/>
        <dbReference type="EC" id="2.7.7.59"/>
    </reaction>
</comment>
<comment type="catalytic activity">
    <reaction evidence="1">
        <text>[protein-PII]-uridylyl-L-tyrosine + H2O = [protein-PII]-L-tyrosine + UMP + H(+)</text>
        <dbReference type="Rhea" id="RHEA:48600"/>
        <dbReference type="Rhea" id="RHEA-COMP:12147"/>
        <dbReference type="Rhea" id="RHEA-COMP:12148"/>
        <dbReference type="ChEBI" id="CHEBI:15377"/>
        <dbReference type="ChEBI" id="CHEBI:15378"/>
        <dbReference type="ChEBI" id="CHEBI:46858"/>
        <dbReference type="ChEBI" id="CHEBI:57865"/>
        <dbReference type="ChEBI" id="CHEBI:90602"/>
    </reaction>
</comment>
<comment type="cofactor">
    <cofactor evidence="1">
        <name>Mg(2+)</name>
        <dbReference type="ChEBI" id="CHEBI:18420"/>
    </cofactor>
</comment>
<comment type="activity regulation">
    <text evidence="1">Uridylyltransferase (UTase) activity is inhibited by glutamine, while glutamine activates uridylyl-removing (UR) activity.</text>
</comment>
<comment type="domain">
    <text evidence="1">Has four distinct domains: an N-terminal nucleotidyltransferase (NT) domain responsible for UTase activity, a central HD domain that encodes UR activity, and two C-terminal ACT domains that seem to have a role in glutamine sensing.</text>
</comment>
<comment type="similarity">
    <text evidence="1">Belongs to the GlnD family.</text>
</comment>
<reference key="1">
    <citation type="journal article" date="2005" name="Genome Res.">
        <title>Coping with cold: the genome of the versatile marine Antarctica bacterium Pseudoalteromonas haloplanktis TAC125.</title>
        <authorList>
            <person name="Medigue C."/>
            <person name="Krin E."/>
            <person name="Pascal G."/>
            <person name="Barbe V."/>
            <person name="Bernsel A."/>
            <person name="Bertin P.N."/>
            <person name="Cheung F."/>
            <person name="Cruveiller S."/>
            <person name="D'Amico S."/>
            <person name="Duilio A."/>
            <person name="Fang G."/>
            <person name="Feller G."/>
            <person name="Ho C."/>
            <person name="Mangenot S."/>
            <person name="Marino G."/>
            <person name="Nilsson J."/>
            <person name="Parrilli E."/>
            <person name="Rocha E.P.C."/>
            <person name="Rouy Z."/>
            <person name="Sekowska A."/>
            <person name="Tutino M.L."/>
            <person name="Vallenet D."/>
            <person name="von Heijne G."/>
            <person name="Danchin A."/>
        </authorList>
    </citation>
    <scope>NUCLEOTIDE SEQUENCE [LARGE SCALE GENOMIC DNA]</scope>
    <source>
        <strain>TAC 125</strain>
    </source>
</reference>
<keyword id="KW-0378">Hydrolase</keyword>
<keyword id="KW-0460">Magnesium</keyword>
<keyword id="KW-0511">Multifunctional enzyme</keyword>
<keyword id="KW-0548">Nucleotidyltransferase</keyword>
<keyword id="KW-1185">Reference proteome</keyword>
<keyword id="KW-0677">Repeat</keyword>
<keyword id="KW-0808">Transferase</keyword>
<protein>
    <recommendedName>
        <fullName evidence="1">Bifunctional uridylyltransferase/uridylyl-removing enzyme</fullName>
        <shortName evidence="1">UTase/UR</shortName>
    </recommendedName>
    <alternativeName>
        <fullName evidence="1">Bifunctional [protein-PII] modification enzyme</fullName>
    </alternativeName>
    <alternativeName>
        <fullName evidence="1">Bifunctional nitrogen sensor protein</fullName>
    </alternativeName>
    <domain>
        <recommendedName>
            <fullName evidence="1">[Protein-PII] uridylyltransferase</fullName>
            <shortName evidence="1">PII uridylyltransferase</shortName>
            <shortName evidence="1">UTase</shortName>
            <ecNumber evidence="1">2.7.7.59</ecNumber>
        </recommendedName>
    </domain>
    <domain>
        <recommendedName>
            <fullName evidence="1">[Protein-PII]-UMP uridylyl-removing enzyme</fullName>
            <shortName evidence="1">UR</shortName>
            <ecNumber evidence="1">3.1.4.-</ecNumber>
        </recommendedName>
    </domain>
</protein>
<proteinExistence type="inferred from homology"/>
<gene>
    <name evidence="1" type="primary">glnD</name>
    <name type="ordered locus">PSHAa2038</name>
</gene>
<dbReference type="EC" id="2.7.7.59" evidence="1"/>
<dbReference type="EC" id="3.1.4.-" evidence="1"/>
<dbReference type="EMBL" id="CR954246">
    <property type="protein sequence ID" value="CAI87094.1"/>
    <property type="molecule type" value="Genomic_DNA"/>
</dbReference>
<dbReference type="SMR" id="Q3IIZ7"/>
<dbReference type="STRING" id="326442.PSHAa2038"/>
<dbReference type="KEGG" id="pha:PSHAa2038"/>
<dbReference type="PATRIC" id="fig|326442.8.peg.1966"/>
<dbReference type="eggNOG" id="COG2844">
    <property type="taxonomic scope" value="Bacteria"/>
</dbReference>
<dbReference type="HOGENOM" id="CLU_012833_0_0_6"/>
<dbReference type="BioCyc" id="PHAL326442:PSHA_RS10070-MONOMER"/>
<dbReference type="Proteomes" id="UP000006843">
    <property type="component" value="Chromosome I"/>
</dbReference>
<dbReference type="GO" id="GO:0008773">
    <property type="term" value="F:[protein-PII] uridylyltransferase activity"/>
    <property type="evidence" value="ECO:0007669"/>
    <property type="project" value="UniProtKB-UniRule"/>
</dbReference>
<dbReference type="GO" id="GO:0008081">
    <property type="term" value="F:phosphoric diester hydrolase activity"/>
    <property type="evidence" value="ECO:0007669"/>
    <property type="project" value="UniProtKB-UniRule"/>
</dbReference>
<dbReference type="GO" id="GO:0006808">
    <property type="term" value="P:regulation of nitrogen utilization"/>
    <property type="evidence" value="ECO:0007669"/>
    <property type="project" value="UniProtKB-UniRule"/>
</dbReference>
<dbReference type="CDD" id="cd04899">
    <property type="entry name" value="ACT_ACR-UUR-like_2"/>
    <property type="match status" value="1"/>
</dbReference>
<dbReference type="CDD" id="cd04900">
    <property type="entry name" value="ACT_UUR-like_1"/>
    <property type="match status" value="1"/>
</dbReference>
<dbReference type="CDD" id="cd00077">
    <property type="entry name" value="HDc"/>
    <property type="match status" value="1"/>
</dbReference>
<dbReference type="CDD" id="cd05401">
    <property type="entry name" value="NT_GlnE_GlnD_like"/>
    <property type="match status" value="1"/>
</dbReference>
<dbReference type="Gene3D" id="3.30.460.10">
    <property type="entry name" value="Beta Polymerase, domain 2"/>
    <property type="match status" value="1"/>
</dbReference>
<dbReference type="Gene3D" id="1.10.3090.10">
    <property type="entry name" value="cca-adding enzyme, domain 2"/>
    <property type="match status" value="1"/>
</dbReference>
<dbReference type="Gene3D" id="1.20.120.330">
    <property type="entry name" value="Nucleotidyltransferases domain 2"/>
    <property type="match status" value="1"/>
</dbReference>
<dbReference type="HAMAP" id="MF_00277">
    <property type="entry name" value="PII_uridylyl_transf"/>
    <property type="match status" value="1"/>
</dbReference>
<dbReference type="InterPro" id="IPR045865">
    <property type="entry name" value="ACT-like_dom_sf"/>
</dbReference>
<dbReference type="InterPro" id="IPR002912">
    <property type="entry name" value="ACT_dom"/>
</dbReference>
<dbReference type="InterPro" id="IPR003607">
    <property type="entry name" value="HD/PDEase_dom"/>
</dbReference>
<dbReference type="InterPro" id="IPR006674">
    <property type="entry name" value="HD_domain"/>
</dbReference>
<dbReference type="InterPro" id="IPR043519">
    <property type="entry name" value="NT_sf"/>
</dbReference>
<dbReference type="InterPro" id="IPR013546">
    <property type="entry name" value="PII_UdlTrfase/GS_AdlTrfase"/>
</dbReference>
<dbReference type="InterPro" id="IPR002934">
    <property type="entry name" value="Polymerase_NTP_transf_dom"/>
</dbReference>
<dbReference type="InterPro" id="IPR010043">
    <property type="entry name" value="UTase/UR"/>
</dbReference>
<dbReference type="NCBIfam" id="TIGR01693">
    <property type="entry name" value="UTase_glnD"/>
    <property type="match status" value="1"/>
</dbReference>
<dbReference type="PANTHER" id="PTHR47320">
    <property type="entry name" value="BIFUNCTIONAL URIDYLYLTRANSFERASE/URIDYLYL-REMOVING ENZYME"/>
    <property type="match status" value="1"/>
</dbReference>
<dbReference type="PANTHER" id="PTHR47320:SF1">
    <property type="entry name" value="BIFUNCTIONAL URIDYLYLTRANSFERASE_URIDYLYL-REMOVING ENZYME"/>
    <property type="match status" value="1"/>
</dbReference>
<dbReference type="Pfam" id="PF08335">
    <property type="entry name" value="GlnD_UR_UTase"/>
    <property type="match status" value="1"/>
</dbReference>
<dbReference type="Pfam" id="PF01966">
    <property type="entry name" value="HD"/>
    <property type="match status" value="1"/>
</dbReference>
<dbReference type="Pfam" id="PF01909">
    <property type="entry name" value="NTP_transf_2"/>
    <property type="match status" value="1"/>
</dbReference>
<dbReference type="PIRSF" id="PIRSF006288">
    <property type="entry name" value="PII_uridyltransf"/>
    <property type="match status" value="1"/>
</dbReference>
<dbReference type="SMART" id="SM00471">
    <property type="entry name" value="HDc"/>
    <property type="match status" value="1"/>
</dbReference>
<dbReference type="SUPFAM" id="SSF55021">
    <property type="entry name" value="ACT-like"/>
    <property type="match status" value="1"/>
</dbReference>
<dbReference type="SUPFAM" id="SSF109604">
    <property type="entry name" value="HD-domain/PDEase-like"/>
    <property type="match status" value="1"/>
</dbReference>
<dbReference type="SUPFAM" id="SSF81301">
    <property type="entry name" value="Nucleotidyltransferase"/>
    <property type="match status" value="1"/>
</dbReference>
<dbReference type="SUPFAM" id="SSF81593">
    <property type="entry name" value="Nucleotidyltransferase substrate binding subunit/domain"/>
    <property type="match status" value="1"/>
</dbReference>
<dbReference type="PROSITE" id="PS51671">
    <property type="entry name" value="ACT"/>
    <property type="match status" value="2"/>
</dbReference>
<dbReference type="PROSITE" id="PS51831">
    <property type="entry name" value="HD"/>
    <property type="match status" value="1"/>
</dbReference>
<sequence>MALPNKVKKLLSDAEQLSDYRDCSSYFYKWLFNEFSKQPVGNLINARAEFIDRLLIKLFHVYDLAHEPDLALIAVGGYGRGELHPYSDIDFLLLVTQQPNAEISEKIGQFVTMLWDLNLEIGHSVRTIAQAIEQKREDVTFATSLLESRLIFGNHIEFEKLKNHIIDTPVWRSNEFFLAKVQEQHLRHRKCHGTAYNLEPNIKENPGGLRDLQTIIWVAKKHFRAETLQELISHGYLTHEEFQELSECLENLWNIRFALHLAAGRSENRLLFDHQPQAAEILGFGSDGKSSVERMMKRLFRIMSRVRELNLMLLAYFEQSISPKHHQPIIQELDRNFERIGNQIKVKSPSVFFRRDQLFMLFEHIADNPEITHIYPSTIRTIRQVRRRLLGDLQDYAACREAFLRLIKHPNGMGRAFTLMHKHGMLAAYLPQWRNIFGQMQFDLFHAYTVDEHTHRLINNIYQYFDKTGVSEFPICSEIVTRMDKPELLYLAGIFHDIAKGRGGDHSELGAVDALAFAKLHAFSVADGKLIAWLVSNHLLMSVTAQRKDINDPGVIKDFATRVKTERQLDYLYCLTVADIRATNDNLWNDWKNTLLRELYLHTQHALRLGLENPMDQRDQIRDKKHQAKQRLLNLGYMEDQIDLIWSRFKANYFTAFSEQQISWHSQHLVNSEDLSQPSVIVSNKAMHGGTQVFVYSPYSGPLFARLVSVIGSKKAQIQHAQVLTTKDGYVLFNFVILEVNGEPIASGRAQSIKRALEQALFEPRKKIRFKKNRSQRFKDFNIKPKIVLRPHPRKDRSLIEIQAIDIPGLLTKIAEVFQAHLLHIHAARITTVGQRAEDFFVVSNNEYQALTDEEQAKIHQALRKKLNAETE</sequence>
<evidence type="ECO:0000255" key="1">
    <source>
        <dbReference type="HAMAP-Rule" id="MF_00277"/>
    </source>
</evidence>
<evidence type="ECO:0000255" key="2">
    <source>
        <dbReference type="PROSITE-ProRule" id="PRU01175"/>
    </source>
</evidence>
<feature type="chain" id="PRO_0000231685" description="Bifunctional uridylyltransferase/uridylyl-removing enzyme">
    <location>
        <begin position="1"/>
        <end position="872"/>
    </location>
</feature>
<feature type="domain" description="HD" evidence="2">
    <location>
        <begin position="450"/>
        <end position="572"/>
    </location>
</feature>
<feature type="domain" description="ACT 1" evidence="1">
    <location>
        <begin position="692"/>
        <end position="773"/>
    </location>
</feature>
<feature type="domain" description="ACT 2" evidence="1">
    <location>
        <begin position="799"/>
        <end position="872"/>
    </location>
</feature>
<feature type="region of interest" description="Uridylyltransferase">
    <location>
        <begin position="1"/>
        <end position="332"/>
    </location>
</feature>
<feature type="region of interest" description="Uridylyl-removing">
    <location>
        <begin position="333"/>
        <end position="691"/>
    </location>
</feature>
<accession>Q3IIZ7</accession>
<name>GLND_PSET1</name>